<accession>Q4UWI7</accession>
<name>TILS_XANC8</name>
<sequence>MDVMQAAGLIPATPPAPVLVAYSGGMDSAVLLHALAATDGYREAGLRAVHVHHGLHADADAWALHCQQQCADLGIALQVVRVQVARDSGSGLEAAARAARHAAFAATLAAGEWLALAHHRDDQAETFLLRALRASGPDGLAAMRPQRPFGPGTLWRPLLGHARADLAAYAQAHAVRWIDDPSNTDPQHERNFLRTQVLPALQQRWPLAADALARSAQLCGDASTLLHDDDVNLLPTVCNSAGALELQPLRSHSPARRARLLRAWVAAAHAPPLPAQGVHALEREIATTQPDRQTCFAWQQTEIRRWRQQLYLLSARATWPAQWQAEWNGDSTLLLPDGAQLQLRGTPGLRFEQPLQVRARQGGERIVLPGRTHSHQLKHLLQQSDLPPWERTRLPLLWAGKTLLAAGDQIVSAKLDQWLRAHAARLQWRSAAPAN</sequence>
<proteinExistence type="inferred from homology"/>
<evidence type="ECO:0000255" key="1">
    <source>
        <dbReference type="HAMAP-Rule" id="MF_01161"/>
    </source>
</evidence>
<comment type="function">
    <text evidence="1">Ligates lysine onto the cytidine present at position 34 of the AUA codon-specific tRNA(Ile) that contains the anticodon CAU, in an ATP-dependent manner. Cytidine is converted to lysidine, thus changing the amino acid specificity of the tRNA from methionine to isoleucine.</text>
</comment>
<comment type="catalytic activity">
    <reaction evidence="1">
        <text>cytidine(34) in tRNA(Ile2) + L-lysine + ATP = lysidine(34) in tRNA(Ile2) + AMP + diphosphate + H(+)</text>
        <dbReference type="Rhea" id="RHEA:43744"/>
        <dbReference type="Rhea" id="RHEA-COMP:10625"/>
        <dbReference type="Rhea" id="RHEA-COMP:10670"/>
        <dbReference type="ChEBI" id="CHEBI:15378"/>
        <dbReference type="ChEBI" id="CHEBI:30616"/>
        <dbReference type="ChEBI" id="CHEBI:32551"/>
        <dbReference type="ChEBI" id="CHEBI:33019"/>
        <dbReference type="ChEBI" id="CHEBI:82748"/>
        <dbReference type="ChEBI" id="CHEBI:83665"/>
        <dbReference type="ChEBI" id="CHEBI:456215"/>
        <dbReference type="EC" id="6.3.4.19"/>
    </reaction>
</comment>
<comment type="subcellular location">
    <subcellularLocation>
        <location evidence="1">Cytoplasm</location>
    </subcellularLocation>
</comment>
<comment type="domain">
    <text>The N-terminal region contains the highly conserved SGGXDS motif, predicted to be a P-loop motif involved in ATP binding.</text>
</comment>
<comment type="similarity">
    <text evidence="1">Belongs to the tRNA(Ile)-lysidine synthase family.</text>
</comment>
<gene>
    <name evidence="1" type="primary">tilS</name>
    <name type="ordered locus">XC_1518</name>
</gene>
<keyword id="KW-0067">ATP-binding</keyword>
<keyword id="KW-0963">Cytoplasm</keyword>
<keyword id="KW-0436">Ligase</keyword>
<keyword id="KW-0547">Nucleotide-binding</keyword>
<keyword id="KW-0819">tRNA processing</keyword>
<organism>
    <name type="scientific">Xanthomonas campestris pv. campestris (strain 8004)</name>
    <dbReference type="NCBI Taxonomy" id="314565"/>
    <lineage>
        <taxon>Bacteria</taxon>
        <taxon>Pseudomonadati</taxon>
        <taxon>Pseudomonadota</taxon>
        <taxon>Gammaproteobacteria</taxon>
        <taxon>Lysobacterales</taxon>
        <taxon>Lysobacteraceae</taxon>
        <taxon>Xanthomonas</taxon>
    </lineage>
</organism>
<protein>
    <recommendedName>
        <fullName evidence="1">tRNA(Ile)-lysidine synthase</fullName>
        <ecNumber evidence="1">6.3.4.19</ecNumber>
    </recommendedName>
    <alternativeName>
        <fullName evidence="1">tRNA(Ile)-2-lysyl-cytidine synthase</fullName>
    </alternativeName>
    <alternativeName>
        <fullName evidence="1">tRNA(Ile)-lysidine synthetase</fullName>
    </alternativeName>
</protein>
<reference key="1">
    <citation type="journal article" date="2005" name="Genome Res.">
        <title>Comparative and functional genomic analyses of the pathogenicity of phytopathogen Xanthomonas campestris pv. campestris.</title>
        <authorList>
            <person name="Qian W."/>
            <person name="Jia Y."/>
            <person name="Ren S.-X."/>
            <person name="He Y.-Q."/>
            <person name="Feng J.-X."/>
            <person name="Lu L.-F."/>
            <person name="Sun Q."/>
            <person name="Ying G."/>
            <person name="Tang D.-J."/>
            <person name="Tang H."/>
            <person name="Wu W."/>
            <person name="Hao P."/>
            <person name="Wang L."/>
            <person name="Jiang B.-L."/>
            <person name="Zeng S."/>
            <person name="Gu W.-Y."/>
            <person name="Lu G."/>
            <person name="Rong L."/>
            <person name="Tian Y."/>
            <person name="Yao Z."/>
            <person name="Fu G."/>
            <person name="Chen B."/>
            <person name="Fang R."/>
            <person name="Qiang B."/>
            <person name="Chen Z."/>
            <person name="Zhao G.-P."/>
            <person name="Tang J.-L."/>
            <person name="He C."/>
        </authorList>
    </citation>
    <scope>NUCLEOTIDE SEQUENCE [LARGE SCALE GENOMIC DNA]</scope>
    <source>
        <strain>8004</strain>
    </source>
</reference>
<feature type="chain" id="PRO_1000085375" description="tRNA(Ile)-lysidine synthase">
    <location>
        <begin position="1"/>
        <end position="435"/>
    </location>
</feature>
<feature type="binding site" evidence="1">
    <location>
        <begin position="23"/>
        <end position="28"/>
    </location>
    <ligand>
        <name>ATP</name>
        <dbReference type="ChEBI" id="CHEBI:30616"/>
    </ligand>
</feature>
<dbReference type="EC" id="6.3.4.19" evidence="1"/>
<dbReference type="EMBL" id="CP000050">
    <property type="protein sequence ID" value="AAY48586.1"/>
    <property type="molecule type" value="Genomic_DNA"/>
</dbReference>
<dbReference type="SMR" id="Q4UWI7"/>
<dbReference type="KEGG" id="xcb:XC_1518"/>
<dbReference type="HOGENOM" id="CLU_018869_2_0_6"/>
<dbReference type="Proteomes" id="UP000000420">
    <property type="component" value="Chromosome"/>
</dbReference>
<dbReference type="GO" id="GO:0005737">
    <property type="term" value="C:cytoplasm"/>
    <property type="evidence" value="ECO:0007669"/>
    <property type="project" value="UniProtKB-SubCell"/>
</dbReference>
<dbReference type="GO" id="GO:0005524">
    <property type="term" value="F:ATP binding"/>
    <property type="evidence" value="ECO:0007669"/>
    <property type="project" value="UniProtKB-UniRule"/>
</dbReference>
<dbReference type="GO" id="GO:0032267">
    <property type="term" value="F:tRNA(Ile)-lysidine synthase activity"/>
    <property type="evidence" value="ECO:0007669"/>
    <property type="project" value="UniProtKB-EC"/>
</dbReference>
<dbReference type="GO" id="GO:0006400">
    <property type="term" value="P:tRNA modification"/>
    <property type="evidence" value="ECO:0007669"/>
    <property type="project" value="UniProtKB-UniRule"/>
</dbReference>
<dbReference type="CDD" id="cd01992">
    <property type="entry name" value="TilS_N"/>
    <property type="match status" value="1"/>
</dbReference>
<dbReference type="Gene3D" id="1.20.59.20">
    <property type="match status" value="1"/>
</dbReference>
<dbReference type="Gene3D" id="3.40.50.620">
    <property type="entry name" value="HUPs"/>
    <property type="match status" value="1"/>
</dbReference>
<dbReference type="HAMAP" id="MF_01161">
    <property type="entry name" value="tRNA_Ile_lys_synt"/>
    <property type="match status" value="1"/>
</dbReference>
<dbReference type="InterPro" id="IPR012796">
    <property type="entry name" value="Lysidine-tRNA-synth_C"/>
</dbReference>
<dbReference type="InterPro" id="IPR014729">
    <property type="entry name" value="Rossmann-like_a/b/a_fold"/>
</dbReference>
<dbReference type="InterPro" id="IPR011063">
    <property type="entry name" value="TilS/TtcA_N"/>
</dbReference>
<dbReference type="InterPro" id="IPR012094">
    <property type="entry name" value="tRNA_Ile_lys_synt"/>
</dbReference>
<dbReference type="InterPro" id="IPR012795">
    <property type="entry name" value="tRNA_Ile_lys_synt_N"/>
</dbReference>
<dbReference type="InterPro" id="IPR015262">
    <property type="entry name" value="tRNA_Ile_lys_synt_subst-bd"/>
</dbReference>
<dbReference type="NCBIfam" id="TIGR02433">
    <property type="entry name" value="lysidine_TilS_C"/>
    <property type="match status" value="1"/>
</dbReference>
<dbReference type="NCBIfam" id="TIGR02432">
    <property type="entry name" value="lysidine_TilS_N"/>
    <property type="match status" value="1"/>
</dbReference>
<dbReference type="PANTHER" id="PTHR43033">
    <property type="entry name" value="TRNA(ILE)-LYSIDINE SYNTHASE-RELATED"/>
    <property type="match status" value="1"/>
</dbReference>
<dbReference type="PANTHER" id="PTHR43033:SF1">
    <property type="entry name" value="TRNA(ILE)-LYSIDINE SYNTHASE-RELATED"/>
    <property type="match status" value="1"/>
</dbReference>
<dbReference type="Pfam" id="PF01171">
    <property type="entry name" value="ATP_bind_3"/>
    <property type="match status" value="1"/>
</dbReference>
<dbReference type="Pfam" id="PF09179">
    <property type="entry name" value="TilS"/>
    <property type="match status" value="1"/>
</dbReference>
<dbReference type="Pfam" id="PF11734">
    <property type="entry name" value="TilS_C"/>
    <property type="match status" value="1"/>
</dbReference>
<dbReference type="SMART" id="SM00977">
    <property type="entry name" value="TilS_C"/>
    <property type="match status" value="1"/>
</dbReference>
<dbReference type="SUPFAM" id="SSF52402">
    <property type="entry name" value="Adenine nucleotide alpha hydrolases-like"/>
    <property type="match status" value="1"/>
</dbReference>
<dbReference type="SUPFAM" id="SSF82829">
    <property type="entry name" value="MesJ substrate recognition domain-like"/>
    <property type="match status" value="1"/>
</dbReference>
<dbReference type="SUPFAM" id="SSF56037">
    <property type="entry name" value="PheT/TilS domain"/>
    <property type="match status" value="1"/>
</dbReference>